<gene>
    <name type="primary">dgoD</name>
    <name type="synonym">yidU</name>
    <name type="ordered locus">b4478</name>
    <name type="ordered locus">JW5629</name>
</gene>
<evidence type="ECO:0000250" key="1"/>
<evidence type="ECO:0000269" key="2">
    <source>
    </source>
</evidence>
<evidence type="ECO:0000269" key="3">
    <source>
    </source>
</evidence>
<evidence type="ECO:0000269" key="4">
    <source>
    </source>
</evidence>
<evidence type="ECO:0000269" key="5">
    <source ref="7"/>
</evidence>
<evidence type="ECO:0000305" key="6"/>
<proteinExistence type="evidence at protein level"/>
<dbReference type="EC" id="4.2.1.6"/>
<dbReference type="EMBL" id="L10328">
    <property type="protein sequence ID" value="AAA62044.1"/>
    <property type="status" value="ALT_FRAME"/>
    <property type="molecule type" value="Genomic_DNA"/>
</dbReference>
<dbReference type="EMBL" id="U00096">
    <property type="protein sequence ID" value="AAT48197.1"/>
    <property type="molecule type" value="Genomic_DNA"/>
</dbReference>
<dbReference type="EMBL" id="AP009048">
    <property type="protein sequence ID" value="BAE77602.1"/>
    <property type="molecule type" value="Genomic_DNA"/>
</dbReference>
<dbReference type="PIR" id="E65171">
    <property type="entry name" value="E65171"/>
</dbReference>
<dbReference type="RefSeq" id="WP_000705001.1">
    <property type="nucleotide sequence ID" value="NZ_STEB01000015.1"/>
</dbReference>
<dbReference type="RefSeq" id="YP_026237.1">
    <property type="nucleotide sequence ID" value="NC_000913.3"/>
</dbReference>
<dbReference type="SMR" id="Q6BF17"/>
<dbReference type="BioGRID" id="4260846">
    <property type="interactions" value="10"/>
</dbReference>
<dbReference type="FunCoup" id="Q6BF17">
    <property type="interactions" value="218"/>
</dbReference>
<dbReference type="STRING" id="511145.b4478"/>
<dbReference type="PaxDb" id="511145-b4478"/>
<dbReference type="DNASU" id="2847765"/>
<dbReference type="EnsemblBacteria" id="AAT48197">
    <property type="protein sequence ID" value="AAT48197"/>
    <property type="gene ID" value="b4478"/>
</dbReference>
<dbReference type="GeneID" id="2847765"/>
<dbReference type="GeneID" id="75205406"/>
<dbReference type="KEGG" id="ecj:JW5629"/>
<dbReference type="KEGG" id="eco:b4478"/>
<dbReference type="KEGG" id="ecoc:C3026_20015"/>
<dbReference type="PATRIC" id="fig|1411691.4.peg.3011"/>
<dbReference type="EchoBASE" id="EB4309"/>
<dbReference type="eggNOG" id="COG4948">
    <property type="taxonomic scope" value="Bacteria"/>
</dbReference>
<dbReference type="HOGENOM" id="CLU_030273_3_2_6"/>
<dbReference type="InParanoid" id="Q6BF17"/>
<dbReference type="OMA" id="PRWCFLK"/>
<dbReference type="OrthoDB" id="103536at2"/>
<dbReference type="PhylomeDB" id="Q6BF17"/>
<dbReference type="BioCyc" id="EcoCyc:GALACTONATE-DEHYDRATASE-MONOMER"/>
<dbReference type="BioCyc" id="MetaCyc:GALACTONATE-DEHYDRATASE-MONOMER"/>
<dbReference type="BRENDA" id="4.2.1.6">
    <property type="organism ID" value="2026"/>
</dbReference>
<dbReference type="UniPathway" id="UPA00081">
    <property type="reaction ID" value="UER00518"/>
</dbReference>
<dbReference type="PRO" id="PR:Q6BF17"/>
<dbReference type="Proteomes" id="UP000000625">
    <property type="component" value="Chromosome"/>
</dbReference>
<dbReference type="GO" id="GO:0008869">
    <property type="term" value="F:galactonate dehydratase activity"/>
    <property type="evidence" value="ECO:0007669"/>
    <property type="project" value="UniProtKB-UniRule"/>
</dbReference>
<dbReference type="GO" id="GO:0016836">
    <property type="term" value="F:hydro-lyase activity"/>
    <property type="evidence" value="ECO:0000318"/>
    <property type="project" value="GO_Central"/>
</dbReference>
<dbReference type="GO" id="GO:0000287">
    <property type="term" value="F:magnesium ion binding"/>
    <property type="evidence" value="ECO:0007669"/>
    <property type="project" value="UniProtKB-UniRule"/>
</dbReference>
<dbReference type="GO" id="GO:0009063">
    <property type="term" value="P:amino acid catabolic process"/>
    <property type="evidence" value="ECO:0007669"/>
    <property type="project" value="InterPro"/>
</dbReference>
<dbReference type="GO" id="GO:0034194">
    <property type="term" value="P:D-galactonate catabolic process"/>
    <property type="evidence" value="ECO:0000315"/>
    <property type="project" value="EcoCyc"/>
</dbReference>
<dbReference type="CDD" id="cd03325">
    <property type="entry name" value="D-galactonate_dehydratase"/>
    <property type="match status" value="1"/>
</dbReference>
<dbReference type="FunFam" id="3.20.20.120:FF:000008">
    <property type="entry name" value="D-galactonate dehydratase"/>
    <property type="match status" value="1"/>
</dbReference>
<dbReference type="FunFam" id="3.30.390.10:FF:000003">
    <property type="entry name" value="D-galactonate dehydratase"/>
    <property type="match status" value="1"/>
</dbReference>
<dbReference type="Gene3D" id="3.20.20.120">
    <property type="entry name" value="Enolase-like C-terminal domain"/>
    <property type="match status" value="1"/>
</dbReference>
<dbReference type="Gene3D" id="3.30.390.10">
    <property type="entry name" value="Enolase-like, N-terminal domain"/>
    <property type="match status" value="1"/>
</dbReference>
<dbReference type="HAMAP" id="MF_01289">
    <property type="entry name" value="Galacton_dehydrat"/>
    <property type="match status" value="1"/>
</dbReference>
<dbReference type="InterPro" id="IPR034593">
    <property type="entry name" value="DgoD-like"/>
</dbReference>
<dbReference type="InterPro" id="IPR036849">
    <property type="entry name" value="Enolase-like_C_sf"/>
</dbReference>
<dbReference type="InterPro" id="IPR029017">
    <property type="entry name" value="Enolase-like_N"/>
</dbReference>
<dbReference type="InterPro" id="IPR029065">
    <property type="entry name" value="Enolase_C-like"/>
</dbReference>
<dbReference type="InterPro" id="IPR023592">
    <property type="entry name" value="Galactonate_deHydtase"/>
</dbReference>
<dbReference type="InterPro" id="IPR018110">
    <property type="entry name" value="Mandel_Rmase/mucon_lact_enz_CS"/>
</dbReference>
<dbReference type="InterPro" id="IPR013342">
    <property type="entry name" value="Mandelate_racemase_C"/>
</dbReference>
<dbReference type="InterPro" id="IPR013341">
    <property type="entry name" value="Mandelate_racemase_N_dom"/>
</dbReference>
<dbReference type="NCBIfam" id="NF010624">
    <property type="entry name" value="PRK14017.1"/>
    <property type="match status" value="1"/>
</dbReference>
<dbReference type="PANTHER" id="PTHR48080:SF2">
    <property type="entry name" value="D-GALACTONATE DEHYDRATASE"/>
    <property type="match status" value="1"/>
</dbReference>
<dbReference type="PANTHER" id="PTHR48080">
    <property type="entry name" value="D-GALACTONATE DEHYDRATASE-RELATED"/>
    <property type="match status" value="1"/>
</dbReference>
<dbReference type="Pfam" id="PF13378">
    <property type="entry name" value="MR_MLE_C"/>
    <property type="match status" value="1"/>
</dbReference>
<dbReference type="Pfam" id="PF02746">
    <property type="entry name" value="MR_MLE_N"/>
    <property type="match status" value="1"/>
</dbReference>
<dbReference type="SFLD" id="SFLDF00003">
    <property type="entry name" value="D-galactonate_dehydratase"/>
    <property type="match status" value="1"/>
</dbReference>
<dbReference type="SFLD" id="SFLDS00001">
    <property type="entry name" value="Enolase"/>
    <property type="match status" value="1"/>
</dbReference>
<dbReference type="SMART" id="SM00922">
    <property type="entry name" value="MR_MLE"/>
    <property type="match status" value="1"/>
</dbReference>
<dbReference type="SUPFAM" id="SSF51604">
    <property type="entry name" value="Enolase C-terminal domain-like"/>
    <property type="match status" value="1"/>
</dbReference>
<dbReference type="SUPFAM" id="SSF54826">
    <property type="entry name" value="Enolase N-terminal domain-like"/>
    <property type="match status" value="1"/>
</dbReference>
<dbReference type="PROSITE" id="PS00908">
    <property type="entry name" value="MR_MLE_1"/>
    <property type="match status" value="1"/>
</dbReference>
<dbReference type="PROSITE" id="PS00909">
    <property type="entry name" value="MR_MLE_2"/>
    <property type="match status" value="1"/>
</dbReference>
<organism>
    <name type="scientific">Escherichia coli (strain K12)</name>
    <dbReference type="NCBI Taxonomy" id="83333"/>
    <lineage>
        <taxon>Bacteria</taxon>
        <taxon>Pseudomonadati</taxon>
        <taxon>Pseudomonadota</taxon>
        <taxon>Gammaproteobacteria</taxon>
        <taxon>Enterobacterales</taxon>
        <taxon>Enterobacteriaceae</taxon>
        <taxon>Escherichia</taxon>
    </lineage>
</organism>
<protein>
    <recommendedName>
        <fullName>D-galactonate dehydratase</fullName>
        <shortName>GalD</shortName>
        <ecNumber>4.2.1.6</ecNumber>
    </recommendedName>
</protein>
<name>DGOD_ECOLI</name>
<sequence length="382" mass="42523">MKITKITTYRLPPRWMFLKIETDEGVVGWGEPVIEGRARTVEAAVHELGDYLIGQDPSRINDLWQVMYRAGFYRGGPILMSAIAGIDQALWDIKGKVLNAPVWQLMGGLVRDKIKAYSWVGGDRPADVIDGIKTLREIGFDTFKLNGCEELGLIDNSRAVDAAVNTVAQIREAFGNQIEFGLDFHGRVSAPMAKVLIKELEPYRPLFIEEPVLAEQAEYYPKLAAQTHIPLAAGERMFSRFDFKRVLEAGGISILQPDLSHAGGITECYKIAGMAEAYDVTLAPHCPLGPIALAACLHIDFVSYNAVLQEQSMGIHYNKGAELLDFVKNKEDFSMVGGFFKPLTKPGLGVEIDEAKVIEFSKNAPDWRNPLWRHEDNSVAEW</sequence>
<feature type="chain" id="PRO_0000171259" description="D-galactonate dehydratase">
    <location>
        <begin position="1"/>
        <end position="382"/>
    </location>
</feature>
<feature type="active site" description="Proton donor">
    <location>
        <position position="185"/>
    </location>
</feature>
<feature type="active site" description="Proton acceptor">
    <location>
        <position position="285"/>
    </location>
</feature>
<feature type="binding site" evidence="1">
    <location>
        <position position="183"/>
    </location>
    <ligand>
        <name>Mg(2+)</name>
        <dbReference type="ChEBI" id="CHEBI:18420"/>
    </ligand>
</feature>
<feature type="binding site" evidence="1">
    <location>
        <position position="209"/>
    </location>
    <ligand>
        <name>Mg(2+)</name>
        <dbReference type="ChEBI" id="CHEBI:18420"/>
    </ligand>
</feature>
<feature type="binding site" evidence="1">
    <location>
        <position position="235"/>
    </location>
    <ligand>
        <name>Mg(2+)</name>
        <dbReference type="ChEBI" id="CHEBI:18420"/>
    </ligand>
</feature>
<feature type="site" description="Increases basicity of active site His" evidence="1">
    <location>
        <position position="258"/>
    </location>
</feature>
<feature type="site" description="Transition state stabilizer">
    <location>
        <position position="310"/>
    </location>
</feature>
<feature type="mutagenesis site" description="Loss of activity." evidence="5">
    <original>H</original>
    <variation>N</variation>
    <variation>Q</variation>
    <location>
        <position position="185"/>
    </location>
</feature>
<feature type="mutagenesis site" description="Loss of activity." evidence="5">
    <original>H</original>
    <variation>N</variation>
    <location>
        <position position="285"/>
    </location>
</feature>
<feature type="mutagenesis site" description="Loss of activity." evidence="5">
    <original>E</original>
    <variation>Q</variation>
    <location>
        <position position="310"/>
    </location>
</feature>
<feature type="sequence conflict" description="In Ref. 1; AAA62044." evidence="6" ref="1">
    <original>E</original>
    <variation>Q</variation>
    <location>
        <position position="137"/>
    </location>
</feature>
<accession>Q6BF17</accession>
<accession>P31458</accession>
<accession>Q2M804</accession>
<reference key="1">
    <citation type="journal article" date="1993" name="Genomics">
        <title>DNA sequence and analysis of 136 kilobases of the Escherichia coli genome: organizational symmetry around the origin of replication.</title>
        <authorList>
            <person name="Burland V.D."/>
            <person name="Plunkett G. III"/>
            <person name="Daniels D.L."/>
            <person name="Blattner F.R."/>
        </authorList>
    </citation>
    <scope>NUCLEOTIDE SEQUENCE [LARGE SCALE GENOMIC DNA]</scope>
    <source>
        <strain>K12 / MG1655 / ATCC 47076</strain>
    </source>
</reference>
<reference key="2">
    <citation type="journal article" date="1997" name="Science">
        <title>The complete genome sequence of Escherichia coli K-12.</title>
        <authorList>
            <person name="Blattner F.R."/>
            <person name="Plunkett G. III"/>
            <person name="Bloch C.A."/>
            <person name="Perna N.T."/>
            <person name="Burland V."/>
            <person name="Riley M."/>
            <person name="Collado-Vides J."/>
            <person name="Glasner J.D."/>
            <person name="Rode C.K."/>
            <person name="Mayhew G.F."/>
            <person name="Gregor J."/>
            <person name="Davis N.W."/>
            <person name="Kirkpatrick H.A."/>
            <person name="Goeden M.A."/>
            <person name="Rose D.J."/>
            <person name="Mau B."/>
            <person name="Shao Y."/>
        </authorList>
    </citation>
    <scope>NUCLEOTIDE SEQUENCE [LARGE SCALE GENOMIC DNA]</scope>
    <source>
        <strain>K12 / MG1655 / ATCC 47076</strain>
    </source>
</reference>
<reference key="3">
    <citation type="journal article" date="2006" name="Nucleic Acids Res.">
        <title>Escherichia coli K-12: a cooperatively developed annotation snapshot -- 2005.</title>
        <authorList>
            <person name="Riley M."/>
            <person name="Abe T."/>
            <person name="Arnaud M.B."/>
            <person name="Berlyn M.K.B."/>
            <person name="Blattner F.R."/>
            <person name="Chaudhuri R.R."/>
            <person name="Glasner J.D."/>
            <person name="Horiuchi T."/>
            <person name="Keseler I.M."/>
            <person name="Kosuge T."/>
            <person name="Mori H."/>
            <person name="Perna N.T."/>
            <person name="Plunkett G. III"/>
            <person name="Rudd K.E."/>
            <person name="Serres M.H."/>
            <person name="Thomas G.H."/>
            <person name="Thomson N.R."/>
            <person name="Wishart D."/>
            <person name="Wanner B.L."/>
        </authorList>
    </citation>
    <scope>SEQUENCE REVISION</scope>
</reference>
<reference key="4">
    <citation type="journal article" date="2006" name="Mol. Syst. Biol.">
        <title>Highly accurate genome sequences of Escherichia coli K-12 strains MG1655 and W3110.</title>
        <authorList>
            <person name="Hayashi K."/>
            <person name="Morooka N."/>
            <person name="Yamamoto Y."/>
            <person name="Fujita K."/>
            <person name="Isono K."/>
            <person name="Choi S."/>
            <person name="Ohtsubo E."/>
            <person name="Baba T."/>
            <person name="Wanner B.L."/>
            <person name="Mori H."/>
            <person name="Horiuchi T."/>
        </authorList>
    </citation>
    <scope>NUCLEOTIDE SEQUENCE [LARGE SCALE GENOMIC DNA]</scope>
    <source>
        <strain>K12 / W3110 / ATCC 27325 / DSM 5911</strain>
    </source>
</reference>
<reference key="5">
    <citation type="journal article" date="1977" name="FEBS Lett.">
        <title>D-galactonate utilisation by enteric bacteria. The catabolic pathway in Escherichia coli.</title>
        <authorList>
            <person name="Deacon J."/>
            <person name="Cooper R.A."/>
        </authorList>
    </citation>
    <scope>FUNCTION</scope>
    <scope>PATHWAY</scope>
    <scope>INDUCTION</scope>
    <source>
        <strain>K12</strain>
    </source>
</reference>
<reference key="6">
    <citation type="journal article" date="1978" name="Arch. Microbiol.">
        <title>The utilisation of D-galactonate and D-2-oxo-3-deoxygalactonate by Escherichia coli K-12. Biochemical and genetical studies.</title>
        <authorList>
            <person name="Cooper R.A."/>
        </authorList>
    </citation>
    <scope>REPRESSION BY GLUCOSE</scope>
    <scope>GENETIC LOCATION</scope>
    <source>
        <strain>K12</strain>
    </source>
</reference>
<reference key="7">
    <citation type="journal article" date="1999" name="J. Am. Chem. Soc.">
        <title>Evolution of enzymatic activities in the enolase superfamily: identification of a 'new' general acid catalyst in the active site of D-galactonate dehydratase from Escherichia coli.</title>
        <authorList>
            <person name="Wieczorek S.J."/>
            <person name="Kalivoda K.A."/>
            <person name="Clifton J.G."/>
            <person name="Ringe D."/>
            <person name="Petsko G.A."/>
            <person name="Gerlt J.A."/>
        </authorList>
    </citation>
    <scope>FUNCTION</scope>
    <scope>KINETIC PARAMETERS</scope>
    <scope>CATALYTIC MECHANISM</scope>
    <scope>REACTION STEREOCHEMISTRY</scope>
    <scope>MUTAGENESIS OF HIS-185; HIS-285 AND GLU-310</scope>
</reference>
<reference key="8">
    <citation type="journal article" date="2019" name="J. Bacteriol.">
        <title>Molecular and functional insights into the regulation of D-galactonate metabolism by the transcriptional regulator DgoR in Escherichia coli.</title>
        <authorList>
            <person name="Singh B."/>
            <person name="Arya G."/>
            <person name="Kundu N."/>
            <person name="Sangwan A."/>
            <person name="Nongthombam S."/>
            <person name="Chaba R."/>
        </authorList>
    </citation>
    <scope>INDUCTION</scope>
    <scope>OPERON</scope>
    <scope>DISRUPTION PHENOTYPE</scope>
</reference>
<keyword id="KW-0456">Lyase</keyword>
<keyword id="KW-0460">Magnesium</keyword>
<keyword id="KW-0479">Metal-binding</keyword>
<keyword id="KW-1185">Reference proteome</keyword>
<comment type="function">
    <text evidence="4 5">Catalyzes the dehydration of D-galactonate to 2-keto-3-deoxy-D-galactonate.</text>
</comment>
<comment type="catalytic activity">
    <reaction>
        <text>D-galactonate = 2-dehydro-3-deoxy-D-galactonate + H2O</text>
        <dbReference type="Rhea" id="RHEA:18649"/>
        <dbReference type="ChEBI" id="CHEBI:12931"/>
        <dbReference type="ChEBI" id="CHEBI:15377"/>
        <dbReference type="ChEBI" id="CHEBI:57989"/>
        <dbReference type="EC" id="4.2.1.6"/>
    </reaction>
</comment>
<comment type="cofactor">
    <cofactor evidence="1">
        <name>Mg(2+)</name>
        <dbReference type="ChEBI" id="CHEBI:18420"/>
    </cofactor>
    <text evidence="1">Binds 1 Mg(2+) ion per subunit.</text>
</comment>
<comment type="biophysicochemical properties">
    <kinetics>
        <KM evidence="5">1.5 mM for D-galactonate</KM>
    </kinetics>
</comment>
<comment type="pathway">
    <text evidence="4">Carbohydrate acid metabolism; D-galactonate degradation; D-glyceraldehyde 3-phosphate and pyruvate from D-galactonate: step 1/3.</text>
</comment>
<comment type="induction">
    <text evidence="2 3 4">Part of the dgoRKADT operon, which encodes proteins for the metabolism of D-galactonate (PubMed:30455279). Negatively regulated by DgoR (PubMed:30455279). Induced by galactonate, but not by glycerol, gluconate or galactose (PubMed:30455279, PubMed:324806). Repressed by glucose (PubMed:211976).</text>
</comment>
<comment type="disruption phenotype">
    <text evidence="3">Deletion mutant cannot grow on D-galactonate.</text>
</comment>
<comment type="miscellaneous">
    <text>Reaction proceeds via an anti dehydration.</text>
</comment>
<comment type="similarity">
    <text evidence="6">Belongs to the mandelate racemase/muconate lactonizing enzyme family. GalD subfamily.</text>
</comment>
<comment type="sequence caution" evidence="6">
    <conflict type="frameshift">
        <sequence resource="EMBL-CDS" id="AAA62044"/>
    </conflict>
    <text>The frameshift in position 1 caused the prediction of an ORF that fused dgoA and dgoD.</text>
</comment>